<evidence type="ECO:0000255" key="1">
    <source>
        <dbReference type="HAMAP-Rule" id="MF_00146"/>
    </source>
</evidence>
<accession>C1AWB6</accession>
<comment type="function">
    <text evidence="1">Bifunctional enzyme that catalyzes both the deamination of dCTP to dUTP and the hydrolysis of dUTP to dUMP without releasing the toxic dUTP intermediate.</text>
</comment>
<comment type="catalytic activity">
    <reaction evidence="1">
        <text>dCTP + 2 H2O = dUMP + NH4(+) + diphosphate</text>
        <dbReference type="Rhea" id="RHEA:19205"/>
        <dbReference type="ChEBI" id="CHEBI:15377"/>
        <dbReference type="ChEBI" id="CHEBI:28938"/>
        <dbReference type="ChEBI" id="CHEBI:33019"/>
        <dbReference type="ChEBI" id="CHEBI:61481"/>
        <dbReference type="ChEBI" id="CHEBI:246422"/>
        <dbReference type="EC" id="3.5.4.30"/>
    </reaction>
</comment>
<comment type="pathway">
    <text evidence="1">Pyrimidine metabolism; dUMP biosynthesis; dUMP from dCTP: step 1/1.</text>
</comment>
<comment type="subunit">
    <text evidence="1">Homotrimer.</text>
</comment>
<comment type="similarity">
    <text evidence="1">Belongs to the dCTP deaminase family.</text>
</comment>
<dbReference type="EC" id="3.5.4.30" evidence="1"/>
<dbReference type="EMBL" id="AP011115">
    <property type="protein sequence ID" value="BAH53689.1"/>
    <property type="molecule type" value="Genomic_DNA"/>
</dbReference>
<dbReference type="RefSeq" id="WP_015889190.1">
    <property type="nucleotide sequence ID" value="NC_012522.1"/>
</dbReference>
<dbReference type="SMR" id="C1AWB6"/>
<dbReference type="STRING" id="632772.ROP_54420"/>
<dbReference type="KEGG" id="rop:ROP_54420"/>
<dbReference type="PATRIC" id="fig|632772.20.peg.5682"/>
<dbReference type="HOGENOM" id="CLU_087476_2_0_11"/>
<dbReference type="OrthoDB" id="9780956at2"/>
<dbReference type="UniPathway" id="UPA00610">
    <property type="reaction ID" value="UER00667"/>
</dbReference>
<dbReference type="Proteomes" id="UP000002212">
    <property type="component" value="Chromosome"/>
</dbReference>
<dbReference type="GO" id="GO:0033973">
    <property type="term" value="F:dCTP deaminase (dUMP-forming) activity"/>
    <property type="evidence" value="ECO:0007669"/>
    <property type="project" value="UniProtKB-UniRule"/>
</dbReference>
<dbReference type="GO" id="GO:0008829">
    <property type="term" value="F:dCTP deaminase activity"/>
    <property type="evidence" value="ECO:0007669"/>
    <property type="project" value="InterPro"/>
</dbReference>
<dbReference type="GO" id="GO:0000166">
    <property type="term" value="F:nucleotide binding"/>
    <property type="evidence" value="ECO:0007669"/>
    <property type="project" value="UniProtKB-KW"/>
</dbReference>
<dbReference type="GO" id="GO:0006226">
    <property type="term" value="P:dUMP biosynthetic process"/>
    <property type="evidence" value="ECO:0007669"/>
    <property type="project" value="UniProtKB-UniRule"/>
</dbReference>
<dbReference type="GO" id="GO:0006229">
    <property type="term" value="P:dUTP biosynthetic process"/>
    <property type="evidence" value="ECO:0007669"/>
    <property type="project" value="InterPro"/>
</dbReference>
<dbReference type="GO" id="GO:0015949">
    <property type="term" value="P:nucleobase-containing small molecule interconversion"/>
    <property type="evidence" value="ECO:0007669"/>
    <property type="project" value="TreeGrafter"/>
</dbReference>
<dbReference type="CDD" id="cd07557">
    <property type="entry name" value="trimeric_dUTPase"/>
    <property type="match status" value="1"/>
</dbReference>
<dbReference type="FunFam" id="2.70.40.10:FF:000005">
    <property type="entry name" value="dCTP deaminase, dUMP-forming"/>
    <property type="match status" value="1"/>
</dbReference>
<dbReference type="Gene3D" id="2.70.40.10">
    <property type="match status" value="1"/>
</dbReference>
<dbReference type="HAMAP" id="MF_00146">
    <property type="entry name" value="dCTP_deaminase"/>
    <property type="match status" value="1"/>
</dbReference>
<dbReference type="InterPro" id="IPR011962">
    <property type="entry name" value="dCTP_deaminase"/>
</dbReference>
<dbReference type="InterPro" id="IPR036157">
    <property type="entry name" value="dUTPase-like_sf"/>
</dbReference>
<dbReference type="InterPro" id="IPR033704">
    <property type="entry name" value="dUTPase_trimeric"/>
</dbReference>
<dbReference type="NCBIfam" id="TIGR02274">
    <property type="entry name" value="dCTP_deam"/>
    <property type="match status" value="1"/>
</dbReference>
<dbReference type="PANTHER" id="PTHR42680">
    <property type="entry name" value="DCTP DEAMINASE"/>
    <property type="match status" value="1"/>
</dbReference>
<dbReference type="PANTHER" id="PTHR42680:SF3">
    <property type="entry name" value="DCTP DEAMINASE"/>
    <property type="match status" value="1"/>
</dbReference>
<dbReference type="Pfam" id="PF22769">
    <property type="entry name" value="DCD"/>
    <property type="match status" value="1"/>
</dbReference>
<dbReference type="SUPFAM" id="SSF51283">
    <property type="entry name" value="dUTPase-like"/>
    <property type="match status" value="1"/>
</dbReference>
<sequence length="189" mass="20520">MLLSDRDIRAELSAGRLGIDPFDDSMVQPSSVDVRLDSLFRVFNNTRYTHIDPAQRQDELTTLVEPAEGEPFVLHPGEFVLGSTLEVCSLPDDLAGRLEGKSSLGRLGLLTHSTAGFIDPGFNGHITLELSNVANLPITLWPGMKIGQLCLLRLSSAAEHPYGSSAVGSKYQGQRGPTPSKAYLNFAQR</sequence>
<proteinExistence type="inferred from homology"/>
<organism>
    <name type="scientific">Rhodococcus opacus (strain B4)</name>
    <dbReference type="NCBI Taxonomy" id="632772"/>
    <lineage>
        <taxon>Bacteria</taxon>
        <taxon>Bacillati</taxon>
        <taxon>Actinomycetota</taxon>
        <taxon>Actinomycetes</taxon>
        <taxon>Mycobacteriales</taxon>
        <taxon>Nocardiaceae</taxon>
        <taxon>Rhodococcus</taxon>
    </lineage>
</organism>
<gene>
    <name evidence="1" type="primary">dcd</name>
    <name type="ordered locus">ROP_54420</name>
</gene>
<keyword id="KW-0378">Hydrolase</keyword>
<keyword id="KW-0546">Nucleotide metabolism</keyword>
<keyword id="KW-0547">Nucleotide-binding</keyword>
<name>DCDB_RHOOB</name>
<protein>
    <recommendedName>
        <fullName evidence="1">dCTP deaminase, dUMP-forming</fullName>
        <ecNumber evidence="1">3.5.4.30</ecNumber>
    </recommendedName>
    <alternativeName>
        <fullName evidence="1">Bifunctional dCTP deaminase:dUTPase</fullName>
    </alternativeName>
    <alternativeName>
        <fullName evidence="1">DCD-DUT</fullName>
    </alternativeName>
</protein>
<feature type="chain" id="PRO_1000123156" description="dCTP deaminase, dUMP-forming">
    <location>
        <begin position="1"/>
        <end position="189"/>
    </location>
</feature>
<feature type="active site" description="Proton donor/acceptor" evidence="1">
    <location>
        <position position="129"/>
    </location>
</feature>
<feature type="binding site" evidence="1">
    <location>
        <begin position="101"/>
        <end position="106"/>
    </location>
    <ligand>
        <name>dCTP</name>
        <dbReference type="ChEBI" id="CHEBI:61481"/>
    </ligand>
</feature>
<feature type="binding site" evidence="1">
    <location>
        <position position="119"/>
    </location>
    <ligand>
        <name>dCTP</name>
        <dbReference type="ChEBI" id="CHEBI:61481"/>
    </ligand>
</feature>
<feature type="binding site" evidence="1">
    <location>
        <begin position="127"/>
        <end position="129"/>
    </location>
    <ligand>
        <name>dCTP</name>
        <dbReference type="ChEBI" id="CHEBI:61481"/>
    </ligand>
</feature>
<feature type="binding site" evidence="1">
    <location>
        <position position="148"/>
    </location>
    <ligand>
        <name>dCTP</name>
        <dbReference type="ChEBI" id="CHEBI:61481"/>
    </ligand>
</feature>
<feature type="binding site" evidence="1">
    <location>
        <position position="162"/>
    </location>
    <ligand>
        <name>dCTP</name>
        <dbReference type="ChEBI" id="CHEBI:61481"/>
    </ligand>
</feature>
<feature type="binding site" evidence="1">
    <location>
        <position position="174"/>
    </location>
    <ligand>
        <name>dCTP</name>
        <dbReference type="ChEBI" id="CHEBI:61481"/>
    </ligand>
</feature>
<feature type="site" description="Important for bifunctional activity" evidence="1">
    <location>
        <begin position="116"/>
        <end position="117"/>
    </location>
</feature>
<reference key="1">
    <citation type="submission" date="2009-03" db="EMBL/GenBank/DDBJ databases">
        <title>Comparison of the complete genome sequences of Rhodococcus erythropolis PR4 and Rhodococcus opacus B4.</title>
        <authorList>
            <person name="Takarada H."/>
            <person name="Sekine M."/>
            <person name="Hosoyama A."/>
            <person name="Yamada R."/>
            <person name="Fujisawa T."/>
            <person name="Omata S."/>
            <person name="Shimizu A."/>
            <person name="Tsukatani N."/>
            <person name="Tanikawa S."/>
            <person name="Fujita N."/>
            <person name="Harayama S."/>
        </authorList>
    </citation>
    <scope>NUCLEOTIDE SEQUENCE [LARGE SCALE GENOMIC DNA]</scope>
    <source>
        <strain>B4</strain>
    </source>
</reference>